<gene>
    <name evidence="1" type="primary">hprK</name>
    <name type="synonym">ptsK</name>
    <name type="ordered locus">LL0618</name>
    <name type="ORF">L4822</name>
</gene>
<comment type="function">
    <text evidence="1">Catalyzes the ATP- as well as the pyrophosphate-dependent phosphorylation of a specific serine residue in HPr, a phosphocarrier protein of the phosphoenolpyruvate-dependent sugar phosphotransferase system (PTS). HprK/P also catalyzes the pyrophosphate-producing, inorganic phosphate-dependent dephosphorylation (phosphorolysis) of seryl-phosphorylated HPr (P-Ser-HPr). The two antagonistic activities of HprK/P are regulated by several intracellular metabolites, which change their concentration in response to the absence or presence of rapidly metabolisable carbon sources (glucose, fructose, etc.) in the growth medium. Therefore, by controlling the phosphorylation state of HPr, HPrK/P is a sensor enzyme that plays a major role in the regulation of carbon metabolism and sugar transport: it mediates carbon catabolite repression (CCR), and regulates PTS-catalyzed carbohydrate uptake and inducer exclusion.</text>
</comment>
<comment type="catalytic activity">
    <reaction evidence="1">
        <text>[HPr protein]-L-serine + ATP = [HPr protein]-O-phospho-L-serine + ADP + H(+)</text>
        <dbReference type="Rhea" id="RHEA:46600"/>
        <dbReference type="Rhea" id="RHEA-COMP:11602"/>
        <dbReference type="Rhea" id="RHEA-COMP:11603"/>
        <dbReference type="ChEBI" id="CHEBI:15378"/>
        <dbReference type="ChEBI" id="CHEBI:29999"/>
        <dbReference type="ChEBI" id="CHEBI:30616"/>
        <dbReference type="ChEBI" id="CHEBI:83421"/>
        <dbReference type="ChEBI" id="CHEBI:456216"/>
    </reaction>
</comment>
<comment type="catalytic activity">
    <reaction evidence="1">
        <text>[HPr protein]-O-phospho-L-serine + phosphate + H(+) = [HPr protein]-L-serine + diphosphate</text>
        <dbReference type="Rhea" id="RHEA:46604"/>
        <dbReference type="Rhea" id="RHEA-COMP:11602"/>
        <dbReference type="Rhea" id="RHEA-COMP:11603"/>
        <dbReference type="ChEBI" id="CHEBI:15378"/>
        <dbReference type="ChEBI" id="CHEBI:29999"/>
        <dbReference type="ChEBI" id="CHEBI:33019"/>
        <dbReference type="ChEBI" id="CHEBI:43474"/>
        <dbReference type="ChEBI" id="CHEBI:83421"/>
    </reaction>
</comment>
<comment type="cofactor">
    <cofactor evidence="1">
        <name>Mg(2+)</name>
        <dbReference type="ChEBI" id="CHEBI:18420"/>
    </cofactor>
</comment>
<comment type="subunit">
    <text evidence="1">Homohexamer.</text>
</comment>
<comment type="domain">
    <text evidence="1">The Walker A ATP-binding motif also binds Pi and PPi.</text>
</comment>
<comment type="miscellaneous">
    <text evidence="1">Both phosphorylation and phosphorolysis are carried out by the same active site and suggest a common mechanism for both reactions.</text>
</comment>
<comment type="similarity">
    <text evidence="1">Belongs to the HPrK/P family.</text>
</comment>
<feature type="chain" id="PRO_0000058962" description="HPr kinase/phosphorylase">
    <location>
        <begin position="1"/>
        <end position="309"/>
    </location>
</feature>
<feature type="region of interest" description="Important for the catalytic mechanism of both phosphorylation and dephosphorylation" evidence="1">
    <location>
        <begin position="201"/>
        <end position="210"/>
    </location>
</feature>
<feature type="region of interest" description="Important for the catalytic mechanism of dephosphorylation" evidence="1">
    <location>
        <begin position="264"/>
        <end position="269"/>
    </location>
</feature>
<feature type="active site" evidence="1">
    <location>
        <position position="138"/>
    </location>
</feature>
<feature type="active site" evidence="1">
    <location>
        <position position="159"/>
    </location>
</feature>
<feature type="active site" description="Proton acceptor; for phosphorylation activity. Proton donor; for dephosphorylation activity" evidence="1">
    <location>
        <position position="177"/>
    </location>
</feature>
<feature type="active site" evidence="1">
    <location>
        <position position="243"/>
    </location>
</feature>
<feature type="binding site" evidence="1">
    <location>
        <begin position="153"/>
        <end position="160"/>
    </location>
    <ligand>
        <name>ATP</name>
        <dbReference type="ChEBI" id="CHEBI:30616"/>
    </ligand>
</feature>
<feature type="binding site" evidence="1">
    <location>
        <position position="160"/>
    </location>
    <ligand>
        <name>Mg(2+)</name>
        <dbReference type="ChEBI" id="CHEBI:18420"/>
    </ligand>
</feature>
<feature type="binding site" evidence="1">
    <location>
        <position position="202"/>
    </location>
    <ligand>
        <name>Mg(2+)</name>
        <dbReference type="ChEBI" id="CHEBI:18420"/>
    </ligand>
</feature>
<evidence type="ECO:0000255" key="1">
    <source>
        <dbReference type="HAMAP-Rule" id="MF_01249"/>
    </source>
</evidence>
<reference key="1">
    <citation type="journal article" date="2001" name="Genome Res.">
        <title>The complete genome sequence of the lactic acid bacterium Lactococcus lactis ssp. lactis IL1403.</title>
        <authorList>
            <person name="Bolotin A."/>
            <person name="Wincker P."/>
            <person name="Mauger S."/>
            <person name="Jaillon O."/>
            <person name="Malarme K."/>
            <person name="Weissenbach J."/>
            <person name="Ehrlich S.D."/>
            <person name="Sorokin A."/>
        </authorList>
    </citation>
    <scope>NUCLEOTIDE SEQUENCE [LARGE SCALE GENOMIC DNA]</scope>
    <source>
        <strain>IL1403</strain>
    </source>
</reference>
<keyword id="KW-0067">ATP-binding</keyword>
<keyword id="KW-0119">Carbohydrate metabolism</keyword>
<keyword id="KW-0418">Kinase</keyword>
<keyword id="KW-0460">Magnesium</keyword>
<keyword id="KW-0479">Metal-binding</keyword>
<keyword id="KW-0511">Multifunctional enzyme</keyword>
<keyword id="KW-0547">Nucleotide-binding</keyword>
<keyword id="KW-1185">Reference proteome</keyword>
<keyword id="KW-0723">Serine/threonine-protein kinase</keyword>
<keyword id="KW-0808">Transferase</keyword>
<sequence length="309" mass="34542">MAVSVQDLLDKIHFHVIYSTETALQKEITTSEIMRPGLEMAGYFDYFTPERIQLFGMKEWSYMMTVVGDNRYDLLKKVMAKETPVVIVARNLEIPSEMVAAAKKSDIVLLQSREATSRLNSVLTSFLDERLAERTTVHGVLMDIFGVGVLIQGASGIGKSETGLELVKRGHRLVADDRVDVFQRDAFTLSGEPAEILRNMIEIRGVGIIDVMSLFGAGAVKDSTDIDMAIYLEYYDKEKAFDRLGNAPTIVEFSDVEVPQTRIPVKTGRNVSVIVEAAVMNFRAKQMGFDATKTFEDRLTDLISHNKES</sequence>
<organism>
    <name type="scientific">Lactococcus lactis subsp. lactis (strain IL1403)</name>
    <name type="common">Streptococcus lactis</name>
    <dbReference type="NCBI Taxonomy" id="272623"/>
    <lineage>
        <taxon>Bacteria</taxon>
        <taxon>Bacillati</taxon>
        <taxon>Bacillota</taxon>
        <taxon>Bacilli</taxon>
        <taxon>Lactobacillales</taxon>
        <taxon>Streptococcaceae</taxon>
        <taxon>Lactococcus</taxon>
    </lineage>
</organism>
<dbReference type="EC" id="2.7.11.-" evidence="1"/>
<dbReference type="EC" id="2.7.4.-" evidence="1"/>
<dbReference type="EMBL" id="AE005176">
    <property type="protein sequence ID" value="AAK04716.1"/>
    <property type="molecule type" value="Genomic_DNA"/>
</dbReference>
<dbReference type="PIR" id="B86702">
    <property type="entry name" value="B86702"/>
</dbReference>
<dbReference type="RefSeq" id="NP_266774.1">
    <property type="nucleotide sequence ID" value="NC_002662.1"/>
</dbReference>
<dbReference type="RefSeq" id="WP_003129528.1">
    <property type="nucleotide sequence ID" value="NC_002662.1"/>
</dbReference>
<dbReference type="SMR" id="Q9CHV0"/>
<dbReference type="PaxDb" id="272623-L4822"/>
<dbReference type="EnsemblBacteria" id="AAK04716">
    <property type="protein sequence ID" value="AAK04716"/>
    <property type="gene ID" value="L4822"/>
</dbReference>
<dbReference type="GeneID" id="89632733"/>
<dbReference type="KEGG" id="lla:L4822"/>
<dbReference type="PATRIC" id="fig|272623.7.peg.660"/>
<dbReference type="eggNOG" id="COG1493">
    <property type="taxonomic scope" value="Bacteria"/>
</dbReference>
<dbReference type="HOGENOM" id="CLU_052030_0_1_9"/>
<dbReference type="OrthoDB" id="9778803at2"/>
<dbReference type="Proteomes" id="UP000002196">
    <property type="component" value="Chromosome"/>
</dbReference>
<dbReference type="GO" id="GO:0005524">
    <property type="term" value="F:ATP binding"/>
    <property type="evidence" value="ECO:0007669"/>
    <property type="project" value="UniProtKB-UniRule"/>
</dbReference>
<dbReference type="GO" id="GO:0000287">
    <property type="term" value="F:magnesium ion binding"/>
    <property type="evidence" value="ECO:0007669"/>
    <property type="project" value="UniProtKB-UniRule"/>
</dbReference>
<dbReference type="GO" id="GO:0000155">
    <property type="term" value="F:phosphorelay sensor kinase activity"/>
    <property type="evidence" value="ECO:0007669"/>
    <property type="project" value="InterPro"/>
</dbReference>
<dbReference type="GO" id="GO:0004674">
    <property type="term" value="F:protein serine/threonine kinase activity"/>
    <property type="evidence" value="ECO:0007669"/>
    <property type="project" value="UniProtKB-KW"/>
</dbReference>
<dbReference type="GO" id="GO:0004712">
    <property type="term" value="F:protein serine/threonine/tyrosine kinase activity"/>
    <property type="evidence" value="ECO:0007669"/>
    <property type="project" value="UniProtKB-UniRule"/>
</dbReference>
<dbReference type="GO" id="GO:0006109">
    <property type="term" value="P:regulation of carbohydrate metabolic process"/>
    <property type="evidence" value="ECO:0007669"/>
    <property type="project" value="UniProtKB-UniRule"/>
</dbReference>
<dbReference type="CDD" id="cd01918">
    <property type="entry name" value="HprK_C"/>
    <property type="match status" value="1"/>
</dbReference>
<dbReference type="FunFam" id="3.40.50.300:FF:000174">
    <property type="entry name" value="HPr kinase/phosphorylase"/>
    <property type="match status" value="1"/>
</dbReference>
<dbReference type="Gene3D" id="3.40.1390.20">
    <property type="entry name" value="HprK N-terminal domain-like"/>
    <property type="match status" value="1"/>
</dbReference>
<dbReference type="Gene3D" id="3.40.50.300">
    <property type="entry name" value="P-loop containing nucleotide triphosphate hydrolases"/>
    <property type="match status" value="1"/>
</dbReference>
<dbReference type="HAMAP" id="MF_01249">
    <property type="entry name" value="HPr_kinase"/>
    <property type="match status" value="1"/>
</dbReference>
<dbReference type="InterPro" id="IPR003755">
    <property type="entry name" value="HPr(Ser)_kin/Pase"/>
</dbReference>
<dbReference type="InterPro" id="IPR011104">
    <property type="entry name" value="Hpr_kin/Pase_C"/>
</dbReference>
<dbReference type="InterPro" id="IPR011126">
    <property type="entry name" value="Hpr_kin/Pase_Hpr_N"/>
</dbReference>
<dbReference type="InterPro" id="IPR027417">
    <property type="entry name" value="P-loop_NTPase"/>
</dbReference>
<dbReference type="InterPro" id="IPR028979">
    <property type="entry name" value="Ser_kin/Pase_Hpr-like_N_sf"/>
</dbReference>
<dbReference type="NCBIfam" id="TIGR00679">
    <property type="entry name" value="hpr-ser"/>
    <property type="match status" value="1"/>
</dbReference>
<dbReference type="PANTHER" id="PTHR30305:SF1">
    <property type="entry name" value="HPR KINASE_PHOSPHORYLASE"/>
    <property type="match status" value="1"/>
</dbReference>
<dbReference type="PANTHER" id="PTHR30305">
    <property type="entry name" value="PROTEIN YJDM-RELATED"/>
    <property type="match status" value="1"/>
</dbReference>
<dbReference type="Pfam" id="PF07475">
    <property type="entry name" value="Hpr_kinase_C"/>
    <property type="match status" value="1"/>
</dbReference>
<dbReference type="Pfam" id="PF02603">
    <property type="entry name" value="Hpr_kinase_N"/>
    <property type="match status" value="1"/>
</dbReference>
<dbReference type="SUPFAM" id="SSF75138">
    <property type="entry name" value="HprK N-terminal domain-like"/>
    <property type="match status" value="1"/>
</dbReference>
<dbReference type="SUPFAM" id="SSF53795">
    <property type="entry name" value="PEP carboxykinase-like"/>
    <property type="match status" value="1"/>
</dbReference>
<proteinExistence type="inferred from homology"/>
<name>HPRK_LACLA</name>
<accession>Q9CHV0</accession>
<protein>
    <recommendedName>
        <fullName evidence="1">HPr kinase/phosphorylase</fullName>
        <shortName evidence="1">HPrK/P</shortName>
        <ecNumber evidence="1">2.7.11.-</ecNumber>
        <ecNumber evidence="1">2.7.4.-</ecNumber>
    </recommendedName>
    <alternativeName>
        <fullName evidence="1">HPr(Ser) kinase/phosphorylase</fullName>
    </alternativeName>
</protein>